<protein>
    <recommendedName>
        <fullName evidence="1">Arginine--tRNA ligase</fullName>
        <ecNumber evidence="1">6.1.1.19</ecNumber>
    </recommendedName>
    <alternativeName>
        <fullName evidence="1">Arginyl-tRNA synthetase</fullName>
        <shortName evidence="1">ArgRS</shortName>
    </alternativeName>
</protein>
<reference key="1">
    <citation type="journal article" date="2010" name="Genome Biol.">
        <title>Structure and dynamics of the pan-genome of Streptococcus pneumoniae and closely related species.</title>
        <authorList>
            <person name="Donati C."/>
            <person name="Hiller N.L."/>
            <person name="Tettelin H."/>
            <person name="Muzzi A."/>
            <person name="Croucher N.J."/>
            <person name="Angiuoli S.V."/>
            <person name="Oggioni M."/>
            <person name="Dunning Hotopp J.C."/>
            <person name="Hu F.Z."/>
            <person name="Riley D.R."/>
            <person name="Covacci A."/>
            <person name="Mitchell T.J."/>
            <person name="Bentley S.D."/>
            <person name="Kilian M."/>
            <person name="Ehrlich G.D."/>
            <person name="Rappuoli R."/>
            <person name="Moxon E.R."/>
            <person name="Masignani V."/>
        </authorList>
    </citation>
    <scope>NUCLEOTIDE SEQUENCE [LARGE SCALE GENOMIC DNA]</scope>
    <source>
        <strain>70585</strain>
    </source>
</reference>
<accession>C1CAQ7</accession>
<organism>
    <name type="scientific">Streptococcus pneumoniae (strain 70585)</name>
    <dbReference type="NCBI Taxonomy" id="488221"/>
    <lineage>
        <taxon>Bacteria</taxon>
        <taxon>Bacillati</taxon>
        <taxon>Bacillota</taxon>
        <taxon>Bacilli</taxon>
        <taxon>Lactobacillales</taxon>
        <taxon>Streptococcaceae</taxon>
        <taxon>Streptococcus</taxon>
    </lineage>
</organism>
<dbReference type="EC" id="6.1.1.19" evidence="1"/>
<dbReference type="EMBL" id="CP000918">
    <property type="protein sequence ID" value="ACO17963.1"/>
    <property type="molecule type" value="Genomic_DNA"/>
</dbReference>
<dbReference type="RefSeq" id="WP_001092701.1">
    <property type="nucleotide sequence ID" value="NC_012468.1"/>
</dbReference>
<dbReference type="SMR" id="C1CAQ7"/>
<dbReference type="KEGG" id="snm:SP70585_2185"/>
<dbReference type="HOGENOM" id="CLU_006406_6_1_9"/>
<dbReference type="Proteomes" id="UP000002211">
    <property type="component" value="Chromosome"/>
</dbReference>
<dbReference type="GO" id="GO:0005737">
    <property type="term" value="C:cytoplasm"/>
    <property type="evidence" value="ECO:0007669"/>
    <property type="project" value="UniProtKB-SubCell"/>
</dbReference>
<dbReference type="GO" id="GO:0004814">
    <property type="term" value="F:arginine-tRNA ligase activity"/>
    <property type="evidence" value="ECO:0007669"/>
    <property type="project" value="UniProtKB-UniRule"/>
</dbReference>
<dbReference type="GO" id="GO:0005524">
    <property type="term" value="F:ATP binding"/>
    <property type="evidence" value="ECO:0007669"/>
    <property type="project" value="UniProtKB-UniRule"/>
</dbReference>
<dbReference type="GO" id="GO:0006420">
    <property type="term" value="P:arginyl-tRNA aminoacylation"/>
    <property type="evidence" value="ECO:0007669"/>
    <property type="project" value="UniProtKB-UniRule"/>
</dbReference>
<dbReference type="CDD" id="cd07956">
    <property type="entry name" value="Anticodon_Ia_Arg"/>
    <property type="match status" value="1"/>
</dbReference>
<dbReference type="CDD" id="cd00671">
    <property type="entry name" value="ArgRS_core"/>
    <property type="match status" value="1"/>
</dbReference>
<dbReference type="FunFam" id="1.10.730.10:FF:000034">
    <property type="entry name" value="Arginine--tRNA ligase"/>
    <property type="match status" value="1"/>
</dbReference>
<dbReference type="FunFam" id="3.30.1360.70:FF:000005">
    <property type="entry name" value="Arginine--tRNA ligase"/>
    <property type="match status" value="1"/>
</dbReference>
<dbReference type="FunFam" id="3.40.50.620:FF:000116">
    <property type="entry name" value="Arginine--tRNA ligase"/>
    <property type="match status" value="1"/>
</dbReference>
<dbReference type="Gene3D" id="3.30.1360.70">
    <property type="entry name" value="Arginyl tRNA synthetase N-terminal domain"/>
    <property type="match status" value="1"/>
</dbReference>
<dbReference type="Gene3D" id="3.40.50.620">
    <property type="entry name" value="HUPs"/>
    <property type="match status" value="1"/>
</dbReference>
<dbReference type="Gene3D" id="1.10.730.10">
    <property type="entry name" value="Isoleucyl-tRNA Synthetase, Domain 1"/>
    <property type="match status" value="1"/>
</dbReference>
<dbReference type="HAMAP" id="MF_00123">
    <property type="entry name" value="Arg_tRNA_synth"/>
    <property type="match status" value="1"/>
</dbReference>
<dbReference type="InterPro" id="IPR001278">
    <property type="entry name" value="Arg-tRNA-ligase"/>
</dbReference>
<dbReference type="InterPro" id="IPR005148">
    <property type="entry name" value="Arg-tRNA-synth_N"/>
</dbReference>
<dbReference type="InterPro" id="IPR036695">
    <property type="entry name" value="Arg-tRNA-synth_N_sf"/>
</dbReference>
<dbReference type="InterPro" id="IPR035684">
    <property type="entry name" value="ArgRS_core"/>
</dbReference>
<dbReference type="InterPro" id="IPR008909">
    <property type="entry name" value="DALR_anticod-bd"/>
</dbReference>
<dbReference type="InterPro" id="IPR014729">
    <property type="entry name" value="Rossmann-like_a/b/a_fold"/>
</dbReference>
<dbReference type="InterPro" id="IPR009080">
    <property type="entry name" value="tRNAsynth_Ia_anticodon-bd"/>
</dbReference>
<dbReference type="NCBIfam" id="TIGR00456">
    <property type="entry name" value="argS"/>
    <property type="match status" value="1"/>
</dbReference>
<dbReference type="PANTHER" id="PTHR11956:SF5">
    <property type="entry name" value="ARGININE--TRNA LIGASE, CYTOPLASMIC"/>
    <property type="match status" value="1"/>
</dbReference>
<dbReference type="PANTHER" id="PTHR11956">
    <property type="entry name" value="ARGINYL-TRNA SYNTHETASE"/>
    <property type="match status" value="1"/>
</dbReference>
<dbReference type="Pfam" id="PF03485">
    <property type="entry name" value="Arg_tRNA_synt_N"/>
    <property type="match status" value="1"/>
</dbReference>
<dbReference type="Pfam" id="PF05746">
    <property type="entry name" value="DALR_1"/>
    <property type="match status" value="1"/>
</dbReference>
<dbReference type="Pfam" id="PF00750">
    <property type="entry name" value="tRNA-synt_1d"/>
    <property type="match status" value="1"/>
</dbReference>
<dbReference type="PRINTS" id="PR01038">
    <property type="entry name" value="TRNASYNTHARG"/>
</dbReference>
<dbReference type="SMART" id="SM01016">
    <property type="entry name" value="Arg_tRNA_synt_N"/>
    <property type="match status" value="1"/>
</dbReference>
<dbReference type="SMART" id="SM00836">
    <property type="entry name" value="DALR_1"/>
    <property type="match status" value="1"/>
</dbReference>
<dbReference type="SUPFAM" id="SSF47323">
    <property type="entry name" value="Anticodon-binding domain of a subclass of class I aminoacyl-tRNA synthetases"/>
    <property type="match status" value="1"/>
</dbReference>
<dbReference type="SUPFAM" id="SSF55190">
    <property type="entry name" value="Arginyl-tRNA synthetase (ArgRS), N-terminal 'additional' domain"/>
    <property type="match status" value="1"/>
</dbReference>
<dbReference type="SUPFAM" id="SSF52374">
    <property type="entry name" value="Nucleotidylyl transferase"/>
    <property type="match status" value="1"/>
</dbReference>
<feature type="chain" id="PRO_1000198934" description="Arginine--tRNA ligase">
    <location>
        <begin position="1"/>
        <end position="563"/>
    </location>
</feature>
<feature type="short sequence motif" description="'HIGH' region">
    <location>
        <begin position="121"/>
        <end position="131"/>
    </location>
</feature>
<comment type="catalytic activity">
    <reaction evidence="1">
        <text>tRNA(Arg) + L-arginine + ATP = L-arginyl-tRNA(Arg) + AMP + diphosphate</text>
        <dbReference type="Rhea" id="RHEA:20301"/>
        <dbReference type="Rhea" id="RHEA-COMP:9658"/>
        <dbReference type="Rhea" id="RHEA-COMP:9673"/>
        <dbReference type="ChEBI" id="CHEBI:30616"/>
        <dbReference type="ChEBI" id="CHEBI:32682"/>
        <dbReference type="ChEBI" id="CHEBI:33019"/>
        <dbReference type="ChEBI" id="CHEBI:78442"/>
        <dbReference type="ChEBI" id="CHEBI:78513"/>
        <dbReference type="ChEBI" id="CHEBI:456215"/>
        <dbReference type="EC" id="6.1.1.19"/>
    </reaction>
</comment>
<comment type="subunit">
    <text evidence="1">Monomer.</text>
</comment>
<comment type="subcellular location">
    <subcellularLocation>
        <location evidence="1">Cytoplasm</location>
    </subcellularLocation>
</comment>
<comment type="similarity">
    <text evidence="1">Belongs to the class-I aminoacyl-tRNA synthetase family.</text>
</comment>
<keyword id="KW-0030">Aminoacyl-tRNA synthetase</keyword>
<keyword id="KW-0067">ATP-binding</keyword>
<keyword id="KW-0963">Cytoplasm</keyword>
<keyword id="KW-0436">Ligase</keyword>
<keyword id="KW-0547">Nucleotide-binding</keyword>
<keyword id="KW-0648">Protein biosynthesis</keyword>
<sequence>MNTKELIASELASIIDSLDQEAILKLLETPKNSEMGDIAFPAFSLAKVERKAPQMIAAELAEKMNSQAFEKVVATGPYVNFFLDKSAISAQVLQAVTTEKEHYADQNIGKQENVVIDMSSPNIAKPFSIGHLRSTVIGDSLSHIFQKIGYQTVKVNHLGDWGKQFGMLIVAYKKWGDEEAVKAHPIDELLKLYVRINAEAENDPSLDEEAREWFRKLENGDEEALALWQWFRDESLVEFNRLYNELKVEFDSYNGEAFYNDKMDAVVDILSEKGLLLESEGAQVVNLEKYGIEHPALIKKSDGATLYITRDLAAALYRKNEYQFAKSIYVVGQEQSAHFKQLKAVLQEMGYDWSDDITHVPFGLVTKEGKKLSTRKGNVILLEPTVAEAVSRAKVQIEAKNPELENKDQVAHAVGVGAIKFYDLKTDRTNGYDFDLEAMVSFEGETGPYVQYAYARIQSILRKADFKPETAGNYSLNDTESWEIIKLIQDFPRIINRAADNFEPSIIAKFAISLAQSFNKYYAHTRILDESPERDSRLALSYATAVVLKEALRLLGVEAPEKM</sequence>
<evidence type="ECO:0000255" key="1">
    <source>
        <dbReference type="HAMAP-Rule" id="MF_00123"/>
    </source>
</evidence>
<name>SYR_STRP7</name>
<gene>
    <name evidence="1" type="primary">argS</name>
    <name type="ordered locus">SP70585_2185</name>
</gene>
<proteinExistence type="inferred from homology"/>